<evidence type="ECO:0000255" key="1">
    <source>
        <dbReference type="PROSITE-ProRule" id="PRU00201"/>
    </source>
</evidence>
<evidence type="ECO:0000256" key="2">
    <source>
        <dbReference type="SAM" id="MobiDB-lite"/>
    </source>
</evidence>
<evidence type="ECO:0000269" key="3">
    <source>
    </source>
</evidence>
<evidence type="ECO:0000305" key="4"/>
<gene>
    <name type="primary">bi</name>
    <name type="synonym">OMB</name>
    <name type="ORF">CG3578</name>
</gene>
<accession>Q24432</accession>
<accession>Q27917</accession>
<accession>Q9W4K5</accession>
<proteinExistence type="evidence at protein level"/>
<reference key="1">
    <citation type="journal article" date="1992" name="Proc. Natl. Acad. Sci. U.S.A.">
        <title>The lethal(1)optomotor-blind gene of Drosophila melanogaster is a major organizer of optic lobe development: isolation and characterization of the gene.</title>
        <authorList>
            <person name="Pflugfelder G.O."/>
            <person name="Roth H."/>
            <person name="Poeck B."/>
            <person name="Kerscher S."/>
            <person name="Schwarz H."/>
            <person name="Jonschker B."/>
            <person name="Heisenberg M."/>
        </authorList>
    </citation>
    <scope>NUCLEOTIDE SEQUENCE [MRNA]</scope>
    <source>
        <strain>Oregon-R</strain>
        <tissue>Embryo</tissue>
    </source>
</reference>
<reference key="2">
    <citation type="journal article" date="2000" name="Science">
        <title>The genome sequence of Drosophila melanogaster.</title>
        <authorList>
            <person name="Adams M.D."/>
            <person name="Celniker S.E."/>
            <person name="Holt R.A."/>
            <person name="Evans C.A."/>
            <person name="Gocayne J.D."/>
            <person name="Amanatides P.G."/>
            <person name="Scherer S.E."/>
            <person name="Li P.W."/>
            <person name="Hoskins R.A."/>
            <person name="Galle R.F."/>
            <person name="George R.A."/>
            <person name="Lewis S.E."/>
            <person name="Richards S."/>
            <person name="Ashburner M."/>
            <person name="Henderson S.N."/>
            <person name="Sutton G.G."/>
            <person name="Wortman J.R."/>
            <person name="Yandell M.D."/>
            <person name="Zhang Q."/>
            <person name="Chen L.X."/>
            <person name="Brandon R.C."/>
            <person name="Rogers Y.-H.C."/>
            <person name="Blazej R.G."/>
            <person name="Champe M."/>
            <person name="Pfeiffer B.D."/>
            <person name="Wan K.H."/>
            <person name="Doyle C."/>
            <person name="Baxter E.G."/>
            <person name="Helt G."/>
            <person name="Nelson C.R."/>
            <person name="Miklos G.L.G."/>
            <person name="Abril J.F."/>
            <person name="Agbayani A."/>
            <person name="An H.-J."/>
            <person name="Andrews-Pfannkoch C."/>
            <person name="Baldwin D."/>
            <person name="Ballew R.M."/>
            <person name="Basu A."/>
            <person name="Baxendale J."/>
            <person name="Bayraktaroglu L."/>
            <person name="Beasley E.M."/>
            <person name="Beeson K.Y."/>
            <person name="Benos P.V."/>
            <person name="Berman B.P."/>
            <person name="Bhandari D."/>
            <person name="Bolshakov S."/>
            <person name="Borkova D."/>
            <person name="Botchan M.R."/>
            <person name="Bouck J."/>
            <person name="Brokstein P."/>
            <person name="Brottier P."/>
            <person name="Burtis K.C."/>
            <person name="Busam D.A."/>
            <person name="Butler H."/>
            <person name="Cadieu E."/>
            <person name="Center A."/>
            <person name="Chandra I."/>
            <person name="Cherry J.M."/>
            <person name="Cawley S."/>
            <person name="Dahlke C."/>
            <person name="Davenport L.B."/>
            <person name="Davies P."/>
            <person name="de Pablos B."/>
            <person name="Delcher A."/>
            <person name="Deng Z."/>
            <person name="Mays A.D."/>
            <person name="Dew I."/>
            <person name="Dietz S.M."/>
            <person name="Dodson K."/>
            <person name="Doup L.E."/>
            <person name="Downes M."/>
            <person name="Dugan-Rocha S."/>
            <person name="Dunkov B.C."/>
            <person name="Dunn P."/>
            <person name="Durbin K.J."/>
            <person name="Evangelista C.C."/>
            <person name="Ferraz C."/>
            <person name="Ferriera S."/>
            <person name="Fleischmann W."/>
            <person name="Fosler C."/>
            <person name="Gabrielian A.E."/>
            <person name="Garg N.S."/>
            <person name="Gelbart W.M."/>
            <person name="Glasser K."/>
            <person name="Glodek A."/>
            <person name="Gong F."/>
            <person name="Gorrell J.H."/>
            <person name="Gu Z."/>
            <person name="Guan P."/>
            <person name="Harris M."/>
            <person name="Harris N.L."/>
            <person name="Harvey D.A."/>
            <person name="Heiman T.J."/>
            <person name="Hernandez J.R."/>
            <person name="Houck J."/>
            <person name="Hostin D."/>
            <person name="Houston K.A."/>
            <person name="Howland T.J."/>
            <person name="Wei M.-H."/>
            <person name="Ibegwam C."/>
            <person name="Jalali M."/>
            <person name="Kalush F."/>
            <person name="Karpen G.H."/>
            <person name="Ke Z."/>
            <person name="Kennison J.A."/>
            <person name="Ketchum K.A."/>
            <person name="Kimmel B.E."/>
            <person name="Kodira C.D."/>
            <person name="Kraft C.L."/>
            <person name="Kravitz S."/>
            <person name="Kulp D."/>
            <person name="Lai Z."/>
            <person name="Lasko P."/>
            <person name="Lei Y."/>
            <person name="Levitsky A.A."/>
            <person name="Li J.H."/>
            <person name="Li Z."/>
            <person name="Liang Y."/>
            <person name="Lin X."/>
            <person name="Liu X."/>
            <person name="Mattei B."/>
            <person name="McIntosh T.C."/>
            <person name="McLeod M.P."/>
            <person name="McPherson D."/>
            <person name="Merkulov G."/>
            <person name="Milshina N.V."/>
            <person name="Mobarry C."/>
            <person name="Morris J."/>
            <person name="Moshrefi A."/>
            <person name="Mount S.M."/>
            <person name="Moy M."/>
            <person name="Murphy B."/>
            <person name="Murphy L."/>
            <person name="Muzny D.M."/>
            <person name="Nelson D.L."/>
            <person name="Nelson D.R."/>
            <person name="Nelson K.A."/>
            <person name="Nixon K."/>
            <person name="Nusskern D.R."/>
            <person name="Pacleb J.M."/>
            <person name="Palazzolo M."/>
            <person name="Pittman G.S."/>
            <person name="Pan S."/>
            <person name="Pollard J."/>
            <person name="Puri V."/>
            <person name="Reese M.G."/>
            <person name="Reinert K."/>
            <person name="Remington K."/>
            <person name="Saunders R.D.C."/>
            <person name="Scheeler F."/>
            <person name="Shen H."/>
            <person name="Shue B.C."/>
            <person name="Siden-Kiamos I."/>
            <person name="Simpson M."/>
            <person name="Skupski M.P."/>
            <person name="Smith T.J."/>
            <person name="Spier E."/>
            <person name="Spradling A.C."/>
            <person name="Stapleton M."/>
            <person name="Strong R."/>
            <person name="Sun E."/>
            <person name="Svirskas R."/>
            <person name="Tector C."/>
            <person name="Turner R."/>
            <person name="Venter E."/>
            <person name="Wang A.H."/>
            <person name="Wang X."/>
            <person name="Wang Z.-Y."/>
            <person name="Wassarman D.A."/>
            <person name="Weinstock G.M."/>
            <person name="Weissenbach J."/>
            <person name="Williams S.M."/>
            <person name="Woodage T."/>
            <person name="Worley K.C."/>
            <person name="Wu D."/>
            <person name="Yang S."/>
            <person name="Yao Q.A."/>
            <person name="Ye J."/>
            <person name="Yeh R.-F."/>
            <person name="Zaveri J.S."/>
            <person name="Zhan M."/>
            <person name="Zhang G."/>
            <person name="Zhao Q."/>
            <person name="Zheng L."/>
            <person name="Zheng X.H."/>
            <person name="Zhong F.N."/>
            <person name="Zhong W."/>
            <person name="Zhou X."/>
            <person name="Zhu S.C."/>
            <person name="Zhu X."/>
            <person name="Smith H.O."/>
            <person name="Gibbs R.A."/>
            <person name="Myers E.W."/>
            <person name="Rubin G.M."/>
            <person name="Venter J.C."/>
        </authorList>
    </citation>
    <scope>NUCLEOTIDE SEQUENCE [LARGE SCALE GENOMIC DNA]</scope>
    <source>
        <strain>Berkeley</strain>
    </source>
</reference>
<reference key="3">
    <citation type="journal article" date="2002" name="Genome Biol.">
        <title>Annotation of the Drosophila melanogaster euchromatic genome: a systematic review.</title>
        <authorList>
            <person name="Misra S."/>
            <person name="Crosby M.A."/>
            <person name="Mungall C.J."/>
            <person name="Matthews B.B."/>
            <person name="Campbell K.S."/>
            <person name="Hradecky P."/>
            <person name="Huang Y."/>
            <person name="Kaminker J.S."/>
            <person name="Millburn G.H."/>
            <person name="Prochnik S.E."/>
            <person name="Smith C.D."/>
            <person name="Tupy J.L."/>
            <person name="Whitfield E.J."/>
            <person name="Bayraktaroglu L."/>
            <person name="Berman B.P."/>
            <person name="Bettencourt B.R."/>
            <person name="Celniker S.E."/>
            <person name="de Grey A.D.N.J."/>
            <person name="Drysdale R.A."/>
            <person name="Harris N.L."/>
            <person name="Richter J."/>
            <person name="Russo S."/>
            <person name="Schroeder A.J."/>
            <person name="Shu S.Q."/>
            <person name="Stapleton M."/>
            <person name="Yamada C."/>
            <person name="Ashburner M."/>
            <person name="Gelbart W.M."/>
            <person name="Rubin G.M."/>
            <person name="Lewis S.E."/>
        </authorList>
    </citation>
    <scope>GENOME REANNOTATION</scope>
    <source>
        <strain>Berkeley</strain>
    </source>
</reference>
<reference key="4">
    <citation type="journal article" date="1993" name="Mol. Gen. Genet.">
        <title>Transcript identification in the optomotor-blind locus of Drosophila melanogaster by intragenic recombination mapping and PCR-aided sequence analysis of lethal point mutations.</title>
        <authorList>
            <person name="Poeck B."/>
            <person name="Balles J."/>
            <person name="Pflugfelder G.O."/>
        </authorList>
    </citation>
    <scope>NUCLEOTIDE SEQUENCE OF 1-447</scope>
    <scope>MUTAGENESIS</scope>
    <source>
        <tissue>Larva</tissue>
    </source>
</reference>
<reference key="5">
    <citation type="journal article" date="2008" name="J. Proteome Res.">
        <title>Phosphoproteome analysis of Drosophila melanogaster embryos.</title>
        <authorList>
            <person name="Zhai B."/>
            <person name="Villen J."/>
            <person name="Beausoleil S.A."/>
            <person name="Mintseris J."/>
            <person name="Gygi S.P."/>
        </authorList>
    </citation>
    <scope>PHOSPHORYLATION [LARGE SCALE ANALYSIS] AT SER-887</scope>
    <scope>IDENTIFICATION BY MASS SPECTROMETRY</scope>
    <source>
        <tissue>Embryo</tissue>
    </source>
</reference>
<dbReference type="EMBL" id="M81796">
    <property type="protein sequence ID" value="AAA28736.1"/>
    <property type="molecule type" value="mRNA"/>
</dbReference>
<dbReference type="EMBL" id="AE014298">
    <property type="protein sequence ID" value="AAF45946.2"/>
    <property type="molecule type" value="Genomic_DNA"/>
</dbReference>
<dbReference type="EMBL" id="S61732">
    <property type="protein sequence ID" value="AAB26697.1"/>
    <property type="molecule type" value="Genomic_DNA"/>
</dbReference>
<dbReference type="EMBL" id="S61727">
    <property type="protein sequence ID" value="AAB26697.1"/>
    <property type="status" value="JOINED"/>
    <property type="molecule type" value="Genomic_DNA"/>
</dbReference>
<dbReference type="EMBL" id="S61729">
    <property type="protein sequence ID" value="AAB26697.1"/>
    <property type="status" value="JOINED"/>
    <property type="molecule type" value="Genomic_DNA"/>
</dbReference>
<dbReference type="EMBL" id="S61744">
    <property type="protein sequence ID" value="AAB26699.1"/>
    <property type="molecule type" value="Genomic_DNA"/>
</dbReference>
<dbReference type="EMBL" id="S61743">
    <property type="protein sequence ID" value="AAB26699.1"/>
    <property type="status" value="JOINED"/>
    <property type="molecule type" value="Genomic_DNA"/>
</dbReference>
<dbReference type="EMBL" id="S61955">
    <property type="protein sequence ID" value="AAB26699.1"/>
    <property type="status" value="JOINED"/>
    <property type="molecule type" value="Genomic_DNA"/>
</dbReference>
<dbReference type="PIR" id="A40213">
    <property type="entry name" value="A40213"/>
</dbReference>
<dbReference type="RefSeq" id="NP_001162662.1">
    <property type="nucleotide sequence ID" value="NM_001169191.1"/>
</dbReference>
<dbReference type="RefSeq" id="NP_001162663.1">
    <property type="nucleotide sequence ID" value="NM_001169192.2"/>
</dbReference>
<dbReference type="RefSeq" id="NP_525070.2">
    <property type="nucleotide sequence ID" value="NM_080331.3"/>
</dbReference>
<dbReference type="SMR" id="Q24432"/>
<dbReference type="BioGRID" id="57896">
    <property type="interactions" value="17"/>
</dbReference>
<dbReference type="FunCoup" id="Q24432">
    <property type="interactions" value="329"/>
</dbReference>
<dbReference type="IntAct" id="Q24432">
    <property type="interactions" value="2"/>
</dbReference>
<dbReference type="STRING" id="7227.FBpp0303589"/>
<dbReference type="GlyGen" id="Q24432">
    <property type="glycosylation" value="4 sites"/>
</dbReference>
<dbReference type="iPTMnet" id="Q24432"/>
<dbReference type="PaxDb" id="7227-FBpp0301040"/>
<dbReference type="EnsemblMetazoa" id="FBtr0070672">
    <property type="protein sequence ID" value="FBpp0070640"/>
    <property type="gene ID" value="FBgn0000179"/>
</dbReference>
<dbReference type="GeneID" id="31379"/>
<dbReference type="KEGG" id="dme:Dmel_CG3578"/>
<dbReference type="AGR" id="FB:FBgn0000179"/>
<dbReference type="CTD" id="31379"/>
<dbReference type="FlyBase" id="FBgn0000179">
    <property type="gene designation" value="bi"/>
</dbReference>
<dbReference type="VEuPathDB" id="VectorBase:FBgn0000179"/>
<dbReference type="eggNOG" id="KOG3585">
    <property type="taxonomic scope" value="Eukaryota"/>
</dbReference>
<dbReference type="GeneTree" id="ENSGT00940000163374"/>
<dbReference type="HOGENOM" id="CLU_011202_0_0_1"/>
<dbReference type="InParanoid" id="Q24432"/>
<dbReference type="OrthoDB" id="7442607at2759"/>
<dbReference type="Reactome" id="R-DME-9856649">
    <property type="pathway name" value="Transcriptional and post-translational regulation of MITF-M expression and activity"/>
</dbReference>
<dbReference type="SignaLink" id="Q24432"/>
<dbReference type="BioGRID-ORCS" id="31379">
    <property type="hits" value="0 hits in 3 CRISPR screens"/>
</dbReference>
<dbReference type="GenomeRNAi" id="31379"/>
<dbReference type="PRO" id="PR:Q24432"/>
<dbReference type="Proteomes" id="UP000000803">
    <property type="component" value="Chromosome X"/>
</dbReference>
<dbReference type="Bgee" id="FBgn0000179">
    <property type="expression patterns" value="Expressed in centrifugal neuron C2 (Drosophila) in brain and 194 other cell types or tissues"/>
</dbReference>
<dbReference type="ExpressionAtlas" id="Q24432">
    <property type="expression patterns" value="baseline and differential"/>
</dbReference>
<dbReference type="GO" id="GO:0000785">
    <property type="term" value="C:chromatin"/>
    <property type="evidence" value="ECO:0000318"/>
    <property type="project" value="GO_Central"/>
</dbReference>
<dbReference type="GO" id="GO:0005634">
    <property type="term" value="C:nucleus"/>
    <property type="evidence" value="ECO:0000314"/>
    <property type="project" value="FlyBase"/>
</dbReference>
<dbReference type="GO" id="GO:0003677">
    <property type="term" value="F:DNA binding"/>
    <property type="evidence" value="ECO:0000314"/>
    <property type="project" value="FlyBase"/>
</dbReference>
<dbReference type="GO" id="GO:0000981">
    <property type="term" value="F:DNA-binding transcription factor activity, RNA polymerase II-specific"/>
    <property type="evidence" value="ECO:0000318"/>
    <property type="project" value="GO_Central"/>
</dbReference>
<dbReference type="GO" id="GO:0000978">
    <property type="term" value="F:RNA polymerase II cis-regulatory region sequence-specific DNA binding"/>
    <property type="evidence" value="ECO:0000250"/>
    <property type="project" value="FlyBase"/>
</dbReference>
<dbReference type="GO" id="GO:0001708">
    <property type="term" value="P:cell fate specification"/>
    <property type="evidence" value="ECO:0000318"/>
    <property type="project" value="GO_Central"/>
</dbReference>
<dbReference type="GO" id="GO:0001745">
    <property type="term" value="P:compound eye morphogenesis"/>
    <property type="evidence" value="ECO:0000315"/>
    <property type="project" value="FlyBase"/>
</dbReference>
<dbReference type="GO" id="GO:0048066">
    <property type="term" value="P:developmental pigmentation"/>
    <property type="evidence" value="ECO:0000304"/>
    <property type="project" value="FlyBase"/>
</dbReference>
<dbReference type="GO" id="GO:0007476">
    <property type="term" value="P:imaginal disc-derived wing morphogenesis"/>
    <property type="evidence" value="ECO:0000315"/>
    <property type="project" value="FlyBase"/>
</dbReference>
<dbReference type="GO" id="GO:0000122">
    <property type="term" value="P:negative regulation of transcription by RNA polymerase II"/>
    <property type="evidence" value="ECO:0000314"/>
    <property type="project" value="FlyBase"/>
</dbReference>
<dbReference type="GO" id="GO:0035265">
    <property type="term" value="P:organ growth"/>
    <property type="evidence" value="ECO:0000315"/>
    <property type="project" value="FlyBase"/>
</dbReference>
<dbReference type="GO" id="GO:0045893">
    <property type="term" value="P:positive regulation of DNA-templated transcription"/>
    <property type="evidence" value="ECO:0007669"/>
    <property type="project" value="InterPro"/>
</dbReference>
<dbReference type="GO" id="GO:0006357">
    <property type="term" value="P:regulation of transcription by RNA polymerase II"/>
    <property type="evidence" value="ECO:0000318"/>
    <property type="project" value="GO_Central"/>
</dbReference>
<dbReference type="GO" id="GO:0048100">
    <property type="term" value="P:wing disc anterior/posterior pattern formation"/>
    <property type="evidence" value="ECO:0000315"/>
    <property type="project" value="FlyBase"/>
</dbReference>
<dbReference type="GO" id="GO:0007472">
    <property type="term" value="P:wing disc morphogenesis"/>
    <property type="evidence" value="ECO:0000315"/>
    <property type="project" value="FlyBase"/>
</dbReference>
<dbReference type="CDD" id="cd20188">
    <property type="entry name" value="T-box_TBX2_3-like"/>
    <property type="match status" value="1"/>
</dbReference>
<dbReference type="FunFam" id="2.60.40.820:FF:000003">
    <property type="entry name" value="T-box transcription factor TBX3"/>
    <property type="match status" value="1"/>
</dbReference>
<dbReference type="Gene3D" id="2.60.40.820">
    <property type="entry name" value="Transcription factor, T-box"/>
    <property type="match status" value="1"/>
</dbReference>
<dbReference type="InterPro" id="IPR021101">
    <property type="entry name" value="Optomoror-blind_N"/>
</dbReference>
<dbReference type="InterPro" id="IPR008967">
    <property type="entry name" value="p53-like_TF_DNA-bd_sf"/>
</dbReference>
<dbReference type="InterPro" id="IPR046360">
    <property type="entry name" value="T-box_DNA-bd"/>
</dbReference>
<dbReference type="InterPro" id="IPR036960">
    <property type="entry name" value="T-box_sf"/>
</dbReference>
<dbReference type="InterPro" id="IPR001699">
    <property type="entry name" value="TF_T-box"/>
</dbReference>
<dbReference type="InterPro" id="IPR018186">
    <property type="entry name" value="TF_T-box_CS"/>
</dbReference>
<dbReference type="PANTHER" id="PTHR11267:SF181">
    <property type="entry name" value="OPTOMOTOR-BLIND PROTEIN"/>
    <property type="match status" value="1"/>
</dbReference>
<dbReference type="PANTHER" id="PTHR11267">
    <property type="entry name" value="T-BOX PROTEIN-RELATED"/>
    <property type="match status" value="1"/>
</dbReference>
<dbReference type="Pfam" id="PF11078">
    <property type="entry name" value="Optomotor-blind"/>
    <property type="match status" value="1"/>
</dbReference>
<dbReference type="Pfam" id="PF00907">
    <property type="entry name" value="T-box"/>
    <property type="match status" value="1"/>
</dbReference>
<dbReference type="PRINTS" id="PR00937">
    <property type="entry name" value="TBOX"/>
</dbReference>
<dbReference type="SMART" id="SM00425">
    <property type="entry name" value="TBOX"/>
    <property type="match status" value="1"/>
</dbReference>
<dbReference type="SUPFAM" id="SSF49417">
    <property type="entry name" value="p53-like transcription factors"/>
    <property type="match status" value="1"/>
</dbReference>
<dbReference type="PROSITE" id="PS01283">
    <property type="entry name" value="TBOX_1"/>
    <property type="match status" value="1"/>
</dbReference>
<dbReference type="PROSITE" id="PS01264">
    <property type="entry name" value="TBOX_2"/>
    <property type="match status" value="1"/>
</dbReference>
<dbReference type="PROSITE" id="PS50252">
    <property type="entry name" value="TBOX_3"/>
    <property type="match status" value="1"/>
</dbReference>
<feature type="chain" id="PRO_0000184466" description="Optomotor-blind protein">
    <location>
        <begin position="1"/>
        <end position="972"/>
    </location>
</feature>
<feature type="DNA-binding region" description="T-box" evidence="1">
    <location>
        <begin position="332"/>
        <end position="513"/>
    </location>
</feature>
<feature type="region of interest" description="Disordered" evidence="2">
    <location>
        <begin position="44"/>
        <end position="248"/>
    </location>
</feature>
<feature type="region of interest" description="Disordered" evidence="2">
    <location>
        <begin position="263"/>
        <end position="286"/>
    </location>
</feature>
<feature type="region of interest" description="Disordered" evidence="2">
    <location>
        <begin position="508"/>
        <end position="563"/>
    </location>
</feature>
<feature type="region of interest" description="Disordered" evidence="2">
    <location>
        <begin position="645"/>
        <end position="676"/>
    </location>
</feature>
<feature type="region of interest" description="Disordered" evidence="2">
    <location>
        <begin position="805"/>
        <end position="889"/>
    </location>
</feature>
<feature type="region of interest" description="Disordered" evidence="2">
    <location>
        <begin position="918"/>
        <end position="972"/>
    </location>
</feature>
<feature type="compositionally biased region" description="Low complexity" evidence="2">
    <location>
        <begin position="49"/>
        <end position="80"/>
    </location>
</feature>
<feature type="compositionally biased region" description="Low complexity" evidence="2">
    <location>
        <begin position="97"/>
        <end position="142"/>
    </location>
</feature>
<feature type="compositionally biased region" description="Pro residues" evidence="2">
    <location>
        <begin position="155"/>
        <end position="176"/>
    </location>
</feature>
<feature type="compositionally biased region" description="Low complexity" evidence="2">
    <location>
        <begin position="177"/>
        <end position="193"/>
    </location>
</feature>
<feature type="compositionally biased region" description="Low complexity" evidence="2">
    <location>
        <begin position="201"/>
        <end position="212"/>
    </location>
</feature>
<feature type="compositionally biased region" description="Pro residues" evidence="2">
    <location>
        <begin position="213"/>
        <end position="225"/>
    </location>
</feature>
<feature type="compositionally biased region" description="Low complexity" evidence="2">
    <location>
        <begin position="226"/>
        <end position="237"/>
    </location>
</feature>
<feature type="compositionally biased region" description="Basic residues" evidence="2">
    <location>
        <begin position="274"/>
        <end position="286"/>
    </location>
</feature>
<feature type="compositionally biased region" description="Gly residues" evidence="2">
    <location>
        <begin position="818"/>
        <end position="831"/>
    </location>
</feature>
<feature type="compositionally biased region" description="Low complexity" evidence="2">
    <location>
        <begin position="835"/>
        <end position="851"/>
    </location>
</feature>
<feature type="compositionally biased region" description="Basic residues" evidence="2">
    <location>
        <begin position="952"/>
        <end position="963"/>
    </location>
</feature>
<feature type="modified residue" description="Phosphoserine" evidence="3">
    <location>
        <position position="887"/>
    </location>
</feature>
<feature type="sequence conflict" description="In Ref. 2; AAF45946." evidence="4" ref="2">
    <original>L</original>
    <variation>F</variation>
    <location>
        <position position="10"/>
    </location>
</feature>
<feature type="sequence conflict" description="In Ref. 2; AAF45946." evidence="4" ref="2">
    <original>P</original>
    <variation>A</variation>
    <location>
        <position position="216"/>
    </location>
</feature>
<feature type="sequence conflict" description="In Ref. 1; AAA28736." evidence="4" ref="1">
    <original>F</original>
    <variation>L</variation>
    <location>
        <position position="511"/>
    </location>
</feature>
<feature type="sequence conflict" description="In Ref. 1; AAA28736." evidence="4" ref="1">
    <original>K</original>
    <variation>NCYR</variation>
    <location>
        <position position="522"/>
    </location>
</feature>
<feature type="sequence conflict" description="In Ref. 1; AAA28736." evidence="4" ref="1">
    <location>
        <position position="820"/>
    </location>
</feature>
<sequence>MRYDVQELLLHQSAEDPFARFANGMAYHPFLQLTQRPTDFSVSSLLTAGSNNNNSGNTNSGNNNSNSNNNTNSNTNNTNNLVAVSPTGGGAQLSPQSNHSSSNTTTTSNTNNSSSNNNNNNSTHNNNNNHTNNNNNNNNNTSQKQGHHLSTTEEPPSPAGTPPPTIVGLPPIPPPNNNSSSSSSNNSASAAAHPSHHPTAAHHSPSTGAAAPPAGPTGLPPPTPPHHLQQQQQQQQHPAPPPPPYFPAAALAALAGSPAGPHPGLYPGGGLRFPPHHPGAHPHAHHLGSAYTTAEDVVLASAVAHQLHPAMRPLRALQPEDDGVVDDPKVTLEGKDLWEKFHKLGTEMVITKSGRQMFPQMKFRVSGLDAKAKYILLLDIVAADDYRYKFHNSRWMVAGKADPEMPKRMYIHPDSPTTGEQWMQKVVSFHKLKLTNNISDKHGFVSTTILNSMHKYQPRFHLVRANDILKLPYSTFRTYVFKETEFIAVTAYQNEKITQLKIDNNPFAKGFRDTGAGKREKKQALMSNRGSDSDKLNPTHVSSSRAPLHLGHAGRPPHLHPHAALLDNQQDDDDKLLDVVGPPQSPLLPLSHSLQQMHAHQHSAALAAWFNHLAGAGAGASEHAAAAAANASAEDALRRRLQADADVERDGSDSSCSESVGGSTGGAFRPTSTGSPKEAVGAAAAAAAAGLNPGGGSYPSPNISVGPPIHPSPHLLPYLYPHGLYPPPHLGLLHNPAAAAAMSPAGLNPGLLFNAQLALAAQHPALFGHAYAAAGHTPVSPLQGLKSHRFSPYSLPGSLGSAFDAVTPGSNANRSGDPPGGGGGGLGGGVVENGPRSLSSSPRPRPASHSPPTRPISMSPTTPPSLMKQPRGGGAGAGVAQSQHSPSELKSMEKMVNGLEVQHNGSAAAAAAALQLAEEAAQHHHHTQAHHQQQQHQSHHQQQHHQQPAQPHPHHQTHLHSHHGATTGGTDQ</sequence>
<name>OMB_DROME</name>
<comment type="function">
    <text>Essential protein that may function as a transcription regulator. Vital for pupal development. Required for proper development of the optic lobes and wings, and abdominal pigmentation.</text>
</comment>
<comment type="subcellular location">
    <subcellularLocation>
        <location evidence="1">Nucleus</location>
    </subcellularLocation>
</comment>
<comment type="tissue specificity">
    <text>In third-instar larvae, expressed in the brain region that will develop into optic lobes and more weakly in the thoracic part of the ventral ganglion.</text>
</comment>
<comment type="developmental stage">
    <text>The peak periods of expression are: mid-embryogenesis, the second day of pupal development and in the adult.</text>
</comment>
<keyword id="KW-0238">DNA-binding</keyword>
<keyword id="KW-0539">Nucleus</keyword>
<keyword id="KW-0597">Phosphoprotein</keyword>
<keyword id="KW-1185">Reference proteome</keyword>
<keyword id="KW-0804">Transcription</keyword>
<keyword id="KW-0805">Transcription regulation</keyword>
<protein>
    <recommendedName>
        <fullName>Optomotor-blind protein</fullName>
    </recommendedName>
    <alternativeName>
        <fullName>Lethal(1)optomotor-blind</fullName>
        <shortName>L(1)omb</shortName>
    </alternativeName>
    <alternativeName>
        <fullName>Protein bifid</fullName>
    </alternativeName>
</protein>
<organism>
    <name type="scientific">Drosophila melanogaster</name>
    <name type="common">Fruit fly</name>
    <dbReference type="NCBI Taxonomy" id="7227"/>
    <lineage>
        <taxon>Eukaryota</taxon>
        <taxon>Metazoa</taxon>
        <taxon>Ecdysozoa</taxon>
        <taxon>Arthropoda</taxon>
        <taxon>Hexapoda</taxon>
        <taxon>Insecta</taxon>
        <taxon>Pterygota</taxon>
        <taxon>Neoptera</taxon>
        <taxon>Endopterygota</taxon>
        <taxon>Diptera</taxon>
        <taxon>Brachycera</taxon>
        <taxon>Muscomorpha</taxon>
        <taxon>Ephydroidea</taxon>
        <taxon>Drosophilidae</taxon>
        <taxon>Drosophila</taxon>
        <taxon>Sophophora</taxon>
    </lineage>
</organism>